<protein>
    <recommendedName>
        <fullName>Amidophosphoribosyltransferase, chloroplastic</fullName>
        <shortName>ATase</shortName>
        <ecNumber>2.4.2.14</ecNumber>
    </recommendedName>
    <alternativeName>
        <fullName>Glutamine phosphoribosylpyrophosphate amidotransferase</fullName>
        <shortName>GPAT</shortName>
    </alternativeName>
</protein>
<feature type="transit peptide" description="Chloroplast" evidence="2">
    <location>
        <begin position="1" status="less than"/>
        <end position="18"/>
    </location>
</feature>
<feature type="chain" id="PRO_0000029290" description="Amidophosphoribosyltransferase, chloroplastic">
    <location>
        <begin position="19"/>
        <end position="485"/>
    </location>
</feature>
<feature type="domain" description="Glutamine amidotransferase type-2" evidence="3">
    <location>
        <begin position="19"/>
        <end position="237"/>
    </location>
</feature>
<feature type="active site" description="Nucleophile" evidence="3">
    <location>
        <position position="19"/>
    </location>
</feature>
<feature type="binding site" evidence="1">
    <location>
        <position position="253"/>
    </location>
    <ligand>
        <name>[4Fe-4S] cluster</name>
        <dbReference type="ChEBI" id="CHEBI:49883"/>
    </ligand>
</feature>
<feature type="binding site" evidence="1">
    <location>
        <position position="300"/>
    </location>
    <ligand>
        <name>Mg(2+)</name>
        <dbReference type="ChEBI" id="CHEBI:18420"/>
    </ligand>
</feature>
<feature type="binding site" evidence="1">
    <location>
        <position position="362"/>
    </location>
    <ligand>
        <name>Mg(2+)</name>
        <dbReference type="ChEBI" id="CHEBI:18420"/>
    </ligand>
</feature>
<feature type="binding site" evidence="1">
    <location>
        <position position="363"/>
    </location>
    <ligand>
        <name>Mg(2+)</name>
        <dbReference type="ChEBI" id="CHEBI:18420"/>
    </ligand>
</feature>
<feature type="binding site" evidence="1">
    <location>
        <position position="399"/>
    </location>
    <ligand>
        <name>[4Fe-4S] cluster</name>
        <dbReference type="ChEBI" id="CHEBI:49883"/>
    </ligand>
</feature>
<feature type="binding site" evidence="1">
    <location>
        <position position="450"/>
    </location>
    <ligand>
        <name>[4Fe-4S] cluster</name>
        <dbReference type="ChEBI" id="CHEBI:49883"/>
    </ligand>
</feature>
<feature type="binding site" evidence="1">
    <location>
        <position position="453"/>
    </location>
    <ligand>
        <name>[4Fe-4S] cluster</name>
        <dbReference type="ChEBI" id="CHEBI:49883"/>
    </ligand>
</feature>
<feature type="non-terminal residue">
    <location>
        <position position="1"/>
    </location>
</feature>
<proteinExistence type="evidence at transcript level"/>
<sequence length="485" mass="53205">KTTNTFASVNDDEKPREECGVVGIYGDPEASRLCSLALHALQHRGQEGAGIVAVHDNLFHQVNGVGLVSDVFNEAKLSELPGSCAIGHVRYSTAGHSKLVNVQPFVAGYRFGSVAVAHNGNFVNYRSLRAKLEDNGSIFNTTSDTEVVLHLIATSKHRPFLLRVVDACENLKGAYSLVFLTEDKLVAVRDFGFRPLVMGRRKNGAVVFASETCALDLIDATYEREVNPGEVVVVDHTGIQSLCLVTHQEPKQCIFEHIYFALPNSVVFGRSVYESRRKFGEILATESPVECDVVIAVPDSGVVAALGYAAKAGVPFQQGLIRSHHVGRTFIEPSQKIRDFGVKLKLFPVRGVLEGKRVVVVDDSIVRGTTSSKIVRLIKEAGAKEVHMRIACPPIVASCYYGVDTPSKEELISNRMDVEEIRKFIGSDSLAFLPLDTLKSLLEDDAPNYCYACFSGKYPVQPENLNPTASMSLTGTMFQWQFETY</sequence>
<dbReference type="EC" id="2.4.2.14"/>
<dbReference type="EMBL" id="L23834">
    <property type="protein sequence ID" value="AAA73944.1"/>
    <property type="molecule type" value="mRNA"/>
</dbReference>
<dbReference type="PIR" id="T10792">
    <property type="entry name" value="T10792"/>
</dbReference>
<dbReference type="SMR" id="P52419"/>
<dbReference type="MEROPS" id="C44.001"/>
<dbReference type="UniPathway" id="UPA00074">
    <property type="reaction ID" value="UER00124"/>
</dbReference>
<dbReference type="GO" id="GO:0009507">
    <property type="term" value="C:chloroplast"/>
    <property type="evidence" value="ECO:0007669"/>
    <property type="project" value="UniProtKB-SubCell"/>
</dbReference>
<dbReference type="GO" id="GO:0051539">
    <property type="term" value="F:4 iron, 4 sulfur cluster binding"/>
    <property type="evidence" value="ECO:0007669"/>
    <property type="project" value="UniProtKB-KW"/>
</dbReference>
<dbReference type="GO" id="GO:0004044">
    <property type="term" value="F:amidophosphoribosyltransferase activity"/>
    <property type="evidence" value="ECO:0007669"/>
    <property type="project" value="UniProtKB-EC"/>
</dbReference>
<dbReference type="GO" id="GO:0046872">
    <property type="term" value="F:metal ion binding"/>
    <property type="evidence" value="ECO:0007669"/>
    <property type="project" value="UniProtKB-KW"/>
</dbReference>
<dbReference type="GO" id="GO:0006189">
    <property type="term" value="P:'de novo' IMP biosynthetic process"/>
    <property type="evidence" value="ECO:0007669"/>
    <property type="project" value="UniProtKB-UniPathway"/>
</dbReference>
<dbReference type="GO" id="GO:0009113">
    <property type="term" value="P:purine nucleobase biosynthetic process"/>
    <property type="evidence" value="ECO:0007669"/>
    <property type="project" value="InterPro"/>
</dbReference>
<dbReference type="CDD" id="cd00715">
    <property type="entry name" value="GPATase_N"/>
    <property type="match status" value="1"/>
</dbReference>
<dbReference type="CDD" id="cd06223">
    <property type="entry name" value="PRTases_typeI"/>
    <property type="match status" value="1"/>
</dbReference>
<dbReference type="Gene3D" id="3.40.50.2020">
    <property type="match status" value="1"/>
</dbReference>
<dbReference type="Gene3D" id="3.60.20.10">
    <property type="entry name" value="Glutamine Phosphoribosylpyrophosphate, subunit 1, domain 1"/>
    <property type="match status" value="1"/>
</dbReference>
<dbReference type="HAMAP" id="MF_01931">
    <property type="entry name" value="PurF"/>
    <property type="match status" value="1"/>
</dbReference>
<dbReference type="InterPro" id="IPR017932">
    <property type="entry name" value="GATase_2_dom"/>
</dbReference>
<dbReference type="InterPro" id="IPR029055">
    <property type="entry name" value="Ntn_hydrolases_N"/>
</dbReference>
<dbReference type="InterPro" id="IPR000836">
    <property type="entry name" value="PRibTrfase_dom"/>
</dbReference>
<dbReference type="InterPro" id="IPR029057">
    <property type="entry name" value="PRTase-like"/>
</dbReference>
<dbReference type="InterPro" id="IPR005854">
    <property type="entry name" value="PurF"/>
</dbReference>
<dbReference type="InterPro" id="IPR035584">
    <property type="entry name" value="PurF_N"/>
</dbReference>
<dbReference type="NCBIfam" id="TIGR01134">
    <property type="entry name" value="purF"/>
    <property type="match status" value="1"/>
</dbReference>
<dbReference type="PANTHER" id="PTHR11907">
    <property type="entry name" value="AMIDOPHOSPHORIBOSYLTRANSFERASE"/>
    <property type="match status" value="1"/>
</dbReference>
<dbReference type="Pfam" id="PF13537">
    <property type="entry name" value="GATase_7"/>
    <property type="match status" value="1"/>
</dbReference>
<dbReference type="Pfam" id="PF00156">
    <property type="entry name" value="Pribosyltran"/>
    <property type="match status" value="1"/>
</dbReference>
<dbReference type="PIRSF" id="PIRSF000485">
    <property type="entry name" value="Amd_phspho_trans"/>
    <property type="match status" value="1"/>
</dbReference>
<dbReference type="SUPFAM" id="SSF56235">
    <property type="entry name" value="N-terminal nucleophile aminohydrolases (Ntn hydrolases)"/>
    <property type="match status" value="1"/>
</dbReference>
<dbReference type="SUPFAM" id="SSF53271">
    <property type="entry name" value="PRTase-like"/>
    <property type="match status" value="1"/>
</dbReference>
<dbReference type="PROSITE" id="PS51278">
    <property type="entry name" value="GATASE_TYPE_2"/>
    <property type="match status" value="1"/>
</dbReference>
<dbReference type="PROSITE" id="PS00103">
    <property type="entry name" value="PUR_PYR_PR_TRANSFER"/>
    <property type="match status" value="1"/>
</dbReference>
<evidence type="ECO:0000250" key="1"/>
<evidence type="ECO:0000255" key="2"/>
<evidence type="ECO:0000255" key="3">
    <source>
        <dbReference type="PROSITE-ProRule" id="PRU00609"/>
    </source>
</evidence>
<evidence type="ECO:0000305" key="4"/>
<organism>
    <name type="scientific">Vigna aconitifolia</name>
    <name type="common">Moth bean</name>
    <name type="synonym">Phaseolus aconitifolius</name>
    <dbReference type="NCBI Taxonomy" id="3918"/>
    <lineage>
        <taxon>Eukaryota</taxon>
        <taxon>Viridiplantae</taxon>
        <taxon>Streptophyta</taxon>
        <taxon>Embryophyta</taxon>
        <taxon>Tracheophyta</taxon>
        <taxon>Spermatophyta</taxon>
        <taxon>Magnoliopsida</taxon>
        <taxon>eudicotyledons</taxon>
        <taxon>Gunneridae</taxon>
        <taxon>Pentapetalae</taxon>
        <taxon>rosids</taxon>
        <taxon>fabids</taxon>
        <taxon>Fabales</taxon>
        <taxon>Fabaceae</taxon>
        <taxon>Papilionoideae</taxon>
        <taxon>50 kb inversion clade</taxon>
        <taxon>NPAAA clade</taxon>
        <taxon>indigoferoid/millettioid clade</taxon>
        <taxon>Phaseoleae</taxon>
        <taxon>Vigna</taxon>
    </lineage>
</organism>
<keyword id="KW-0004">4Fe-4S</keyword>
<keyword id="KW-0150">Chloroplast</keyword>
<keyword id="KW-0315">Glutamine amidotransferase</keyword>
<keyword id="KW-0328">Glycosyltransferase</keyword>
<keyword id="KW-0408">Iron</keyword>
<keyword id="KW-0411">Iron-sulfur</keyword>
<keyword id="KW-0460">Magnesium</keyword>
<keyword id="KW-0479">Metal-binding</keyword>
<keyword id="KW-0934">Plastid</keyword>
<keyword id="KW-0658">Purine biosynthesis</keyword>
<keyword id="KW-0808">Transferase</keyword>
<keyword id="KW-0809">Transit peptide</keyword>
<name>PUR1_VIGAC</name>
<accession>P52419</accession>
<gene>
    <name type="primary">PUR1</name>
</gene>
<comment type="catalytic activity">
    <reaction>
        <text>5-phospho-beta-D-ribosylamine + L-glutamate + diphosphate = 5-phospho-alpha-D-ribose 1-diphosphate + L-glutamine + H2O</text>
        <dbReference type="Rhea" id="RHEA:14905"/>
        <dbReference type="ChEBI" id="CHEBI:15377"/>
        <dbReference type="ChEBI" id="CHEBI:29985"/>
        <dbReference type="ChEBI" id="CHEBI:33019"/>
        <dbReference type="ChEBI" id="CHEBI:58017"/>
        <dbReference type="ChEBI" id="CHEBI:58359"/>
        <dbReference type="ChEBI" id="CHEBI:58681"/>
        <dbReference type="EC" id="2.4.2.14"/>
    </reaction>
</comment>
<comment type="cofactor">
    <cofactor evidence="1">
        <name>Mg(2+)</name>
        <dbReference type="ChEBI" id="CHEBI:18420"/>
    </cofactor>
    <text evidence="1">Binds 1 Mg(2+) ion per subunit.</text>
</comment>
<comment type="cofactor">
    <cofactor evidence="1">
        <name>[4Fe-4S] cluster</name>
        <dbReference type="ChEBI" id="CHEBI:49883"/>
    </cofactor>
    <text evidence="1">Binds 1 [4Fe-4S] cluster per subunit.</text>
</comment>
<comment type="pathway">
    <text>Purine metabolism; IMP biosynthesis via de novo pathway; N(1)-(5-phospho-D-ribosyl)glycinamide from 5-phospho-alpha-D-ribose 1-diphosphate: step 1/2.</text>
</comment>
<comment type="subcellular location">
    <subcellularLocation>
        <location>Plastid</location>
        <location>Chloroplast</location>
    </subcellularLocation>
</comment>
<comment type="similarity">
    <text evidence="4">In the C-terminal section; belongs to the purine/pyrimidine phosphoribosyltransferase family.</text>
</comment>
<reference key="1">
    <citation type="journal article" date="1995" name="Plant J.">
        <title>Control of de novo purine biosynthesis genes in ureide-producing legumes: induction of glutamine phosphoribosylpyrophosphate amidotransferase gene and characterization of its cDNA from soybean and Vigna.</title>
        <authorList>
            <person name="Kim J.H."/>
            <person name="Delauney A.J."/>
            <person name="Verma D.P.S."/>
        </authorList>
    </citation>
    <scope>NUCLEOTIDE SEQUENCE [MRNA]</scope>
    <source>
        <tissue>Root nodule</tissue>
    </source>
</reference>